<feature type="chain" id="PRO_1000114140" description="Porphobilinogen deaminase">
    <location>
        <begin position="1"/>
        <end position="342"/>
    </location>
</feature>
<feature type="region of interest" description="Disordered" evidence="2">
    <location>
        <begin position="323"/>
        <end position="342"/>
    </location>
</feature>
<feature type="modified residue" description="S-(dipyrrolylmethanemethyl)cysteine" evidence="1">
    <location>
        <position position="249"/>
    </location>
</feature>
<comment type="function">
    <text evidence="1">Tetrapolymerization of the monopyrrole PBG into the hydroxymethylbilane pre-uroporphyrinogen in several discrete steps.</text>
</comment>
<comment type="catalytic activity">
    <reaction evidence="1">
        <text>4 porphobilinogen + H2O = hydroxymethylbilane + 4 NH4(+)</text>
        <dbReference type="Rhea" id="RHEA:13185"/>
        <dbReference type="ChEBI" id="CHEBI:15377"/>
        <dbReference type="ChEBI" id="CHEBI:28938"/>
        <dbReference type="ChEBI" id="CHEBI:57845"/>
        <dbReference type="ChEBI" id="CHEBI:58126"/>
        <dbReference type="EC" id="2.5.1.61"/>
    </reaction>
</comment>
<comment type="cofactor">
    <cofactor evidence="1">
        <name>dipyrromethane</name>
        <dbReference type="ChEBI" id="CHEBI:60342"/>
    </cofactor>
    <text evidence="1">Binds 1 dipyrromethane group covalently.</text>
</comment>
<comment type="pathway">
    <text evidence="1">Porphyrin-containing compound metabolism; protoporphyrin-IX biosynthesis; coproporphyrinogen-III from 5-aminolevulinate: step 2/4.</text>
</comment>
<comment type="subunit">
    <text evidence="1">Monomer.</text>
</comment>
<comment type="miscellaneous">
    <text evidence="1">The porphobilinogen subunits are added to the dipyrromethane group.</text>
</comment>
<comment type="similarity">
    <text evidence="1">Belongs to the HMBS family.</text>
</comment>
<protein>
    <recommendedName>
        <fullName evidence="1">Porphobilinogen deaminase</fullName>
        <shortName evidence="1">PBG</shortName>
        <ecNumber evidence="1">2.5.1.61</ecNumber>
    </recommendedName>
    <alternativeName>
        <fullName evidence="1">Hydroxymethylbilane synthase</fullName>
        <shortName evidence="1">HMBS</shortName>
    </alternativeName>
    <alternativeName>
        <fullName evidence="1">Pre-uroporphyrinogen synthase</fullName>
    </alternativeName>
</protein>
<proteinExistence type="inferred from homology"/>
<accession>B2T1D1</accession>
<organism>
    <name type="scientific">Paraburkholderia phytofirmans (strain DSM 17436 / LMG 22146 / PsJN)</name>
    <name type="common">Burkholderia phytofirmans</name>
    <dbReference type="NCBI Taxonomy" id="398527"/>
    <lineage>
        <taxon>Bacteria</taxon>
        <taxon>Pseudomonadati</taxon>
        <taxon>Pseudomonadota</taxon>
        <taxon>Betaproteobacteria</taxon>
        <taxon>Burkholderiales</taxon>
        <taxon>Burkholderiaceae</taxon>
        <taxon>Paraburkholderia</taxon>
    </lineage>
</organism>
<sequence>MNTETFSTPPHTLVIASRESRLAMWQAEHVRCALHKLYPSCDVKILGMTTRGDQILDRTLSKVGGKGLFVKELEAALADGRADLAVHSLKDVPMELPAGFALSTIMEREDPRDALVSNDYDSLAALPAGAVVGTSSLRREAMLRMRYPHLEVRPLRGNLDTRLSKLDRGDYAAIILAAAGLKRLGLGERIRALLDPEDSLPAAGQGALGIEIRADRADLAAWLAPLHHDHTAAAVEAERMVSRALGGSCEVPLAAYATWRDGALHLRGIVATPDGQRVLSAQASAPAPSVERAVALGQEVASALEQQGAMDIVRALSAASGPAAAKQGAAEDGAADSAATGE</sequence>
<name>HEM3_PARPJ</name>
<evidence type="ECO:0000255" key="1">
    <source>
        <dbReference type="HAMAP-Rule" id="MF_00260"/>
    </source>
</evidence>
<evidence type="ECO:0000256" key="2">
    <source>
        <dbReference type="SAM" id="MobiDB-lite"/>
    </source>
</evidence>
<gene>
    <name evidence="1" type="primary">hemC</name>
    <name type="ordered locus">Bphyt_1069</name>
</gene>
<reference key="1">
    <citation type="journal article" date="2011" name="J. Bacteriol.">
        <title>Complete genome sequence of the plant growth-promoting endophyte Burkholderia phytofirmans strain PsJN.</title>
        <authorList>
            <person name="Weilharter A."/>
            <person name="Mitter B."/>
            <person name="Shin M.V."/>
            <person name="Chain P.S."/>
            <person name="Nowak J."/>
            <person name="Sessitsch A."/>
        </authorList>
    </citation>
    <scope>NUCLEOTIDE SEQUENCE [LARGE SCALE GENOMIC DNA]</scope>
    <source>
        <strain>DSM 17436 / LMG 22146 / PsJN</strain>
    </source>
</reference>
<keyword id="KW-0627">Porphyrin biosynthesis</keyword>
<keyword id="KW-0808">Transferase</keyword>
<dbReference type="EC" id="2.5.1.61" evidence="1"/>
<dbReference type="EMBL" id="CP001052">
    <property type="protein sequence ID" value="ACD15488.1"/>
    <property type="molecule type" value="Genomic_DNA"/>
</dbReference>
<dbReference type="RefSeq" id="WP_012432116.1">
    <property type="nucleotide sequence ID" value="NC_010681.1"/>
</dbReference>
<dbReference type="SMR" id="B2T1D1"/>
<dbReference type="STRING" id="398527.Bphyt_1069"/>
<dbReference type="KEGG" id="bpy:Bphyt_1069"/>
<dbReference type="eggNOG" id="COG0181">
    <property type="taxonomic scope" value="Bacteria"/>
</dbReference>
<dbReference type="HOGENOM" id="CLU_019704_0_2_4"/>
<dbReference type="OrthoDB" id="9810298at2"/>
<dbReference type="UniPathway" id="UPA00251">
    <property type="reaction ID" value="UER00319"/>
</dbReference>
<dbReference type="Proteomes" id="UP000001739">
    <property type="component" value="Chromosome 1"/>
</dbReference>
<dbReference type="GO" id="GO:0005737">
    <property type="term" value="C:cytoplasm"/>
    <property type="evidence" value="ECO:0007669"/>
    <property type="project" value="TreeGrafter"/>
</dbReference>
<dbReference type="GO" id="GO:0004418">
    <property type="term" value="F:hydroxymethylbilane synthase activity"/>
    <property type="evidence" value="ECO:0007669"/>
    <property type="project" value="UniProtKB-UniRule"/>
</dbReference>
<dbReference type="GO" id="GO:0006782">
    <property type="term" value="P:protoporphyrinogen IX biosynthetic process"/>
    <property type="evidence" value="ECO:0007669"/>
    <property type="project" value="UniProtKB-UniRule"/>
</dbReference>
<dbReference type="CDD" id="cd13646">
    <property type="entry name" value="PBP2_EcHMBS_like"/>
    <property type="match status" value="1"/>
</dbReference>
<dbReference type="FunFam" id="3.40.190.10:FF:000004">
    <property type="entry name" value="Porphobilinogen deaminase"/>
    <property type="match status" value="1"/>
</dbReference>
<dbReference type="FunFam" id="3.40.190.10:FF:000005">
    <property type="entry name" value="Porphobilinogen deaminase"/>
    <property type="match status" value="1"/>
</dbReference>
<dbReference type="Gene3D" id="3.40.190.10">
    <property type="entry name" value="Periplasmic binding protein-like II"/>
    <property type="match status" value="2"/>
</dbReference>
<dbReference type="Gene3D" id="3.30.160.40">
    <property type="entry name" value="Porphobilinogen deaminase, C-terminal domain"/>
    <property type="match status" value="1"/>
</dbReference>
<dbReference type="HAMAP" id="MF_00260">
    <property type="entry name" value="Porphobil_deam"/>
    <property type="match status" value="1"/>
</dbReference>
<dbReference type="InterPro" id="IPR000860">
    <property type="entry name" value="HemC"/>
</dbReference>
<dbReference type="InterPro" id="IPR022419">
    <property type="entry name" value="Porphobilin_deaminase_cofac_BS"/>
</dbReference>
<dbReference type="InterPro" id="IPR022417">
    <property type="entry name" value="Porphobilin_deaminase_N"/>
</dbReference>
<dbReference type="InterPro" id="IPR022418">
    <property type="entry name" value="Porphobilinogen_deaminase_C"/>
</dbReference>
<dbReference type="InterPro" id="IPR036803">
    <property type="entry name" value="Porphobilinogen_deaminase_C_sf"/>
</dbReference>
<dbReference type="NCBIfam" id="TIGR00212">
    <property type="entry name" value="hemC"/>
    <property type="match status" value="1"/>
</dbReference>
<dbReference type="PANTHER" id="PTHR11557">
    <property type="entry name" value="PORPHOBILINOGEN DEAMINASE"/>
    <property type="match status" value="1"/>
</dbReference>
<dbReference type="PANTHER" id="PTHR11557:SF0">
    <property type="entry name" value="PORPHOBILINOGEN DEAMINASE"/>
    <property type="match status" value="1"/>
</dbReference>
<dbReference type="Pfam" id="PF01379">
    <property type="entry name" value="Porphobil_deam"/>
    <property type="match status" value="1"/>
</dbReference>
<dbReference type="Pfam" id="PF03900">
    <property type="entry name" value="Porphobil_deamC"/>
    <property type="match status" value="1"/>
</dbReference>
<dbReference type="PIRSF" id="PIRSF001438">
    <property type="entry name" value="4pyrrol_synth_OHMeBilane_synth"/>
    <property type="match status" value="1"/>
</dbReference>
<dbReference type="PRINTS" id="PR00151">
    <property type="entry name" value="PORPHBDMNASE"/>
</dbReference>
<dbReference type="SUPFAM" id="SSF53850">
    <property type="entry name" value="Periplasmic binding protein-like II"/>
    <property type="match status" value="1"/>
</dbReference>
<dbReference type="SUPFAM" id="SSF54782">
    <property type="entry name" value="Porphobilinogen deaminase (hydroxymethylbilane synthase), C-terminal domain"/>
    <property type="match status" value="1"/>
</dbReference>
<dbReference type="PROSITE" id="PS00533">
    <property type="entry name" value="PORPHOBILINOGEN_DEAM"/>
    <property type="match status" value="1"/>
</dbReference>